<accession>O14013</accession>
<accession>Q9USB1</accession>
<keyword id="KW-0539">Nucleus</keyword>
<keyword id="KW-1185">Reference proteome</keyword>
<keyword id="KW-0804">Transcription</keyword>
<keyword id="KW-0805">Transcription regulation</keyword>
<sequence>MSSSINGLNESEGSTPLSTASIIGSSEQLYMTHDERYLDVLQQYEVETENKRDFDLEEEQWGVLSGSCVDGTYWSAEEKELFFQAVARNGKRDLDLIAYSIPSKSAVQIERYINALENELRWLRNHVDASVRSQCLLKYEDIPIAMEMSQNWIDWEEKIAERLLEGSNISGVETSHYNAQSVKNKTSNEDLFDTNEMRKISERFYHFDRQAPFPSNPLSAGATEFLLQIIKSKLKELIGTSIFLAESRFRKLEANNAFHRKPIIKNRDVVLSGKFLRFHRFNIPGFWKYLPTRQKMNVYKRNKRLKFQNYIHIMESDERQSKLKLGRVRARKTKNNENTMFFDSKEHSTDESDGNLGEHDVKRKVDSVPADETSINGFKKSVNQAEYPDNAQMFMDESVAEESLVEIDDSVEAYDMIQSKNYESFVWKYVLHLTDEMSTEDALFETIPLSNLLAQKRMKDKLKGSDVFTTLKITSKSLHNIDEHSDSDDEVQPICYYYKDPVVSHAPGAAEVVSELESGYVGLISYDLSNLPNSTEDPERKLAKPVSSWELSLPLK</sequence>
<feature type="chain" id="PRO_0000116649" description="RNA polymerase I-specific transcription initiation factor rrn5">
    <location>
        <begin position="1"/>
        <end position="556"/>
    </location>
</feature>
<reference key="1">
    <citation type="journal article" date="2002" name="Nature">
        <title>The genome sequence of Schizosaccharomyces pombe.</title>
        <authorList>
            <person name="Wood V."/>
            <person name="Gwilliam R."/>
            <person name="Rajandream M.A."/>
            <person name="Lyne M.H."/>
            <person name="Lyne R."/>
            <person name="Stewart A."/>
            <person name="Sgouros J.G."/>
            <person name="Peat N."/>
            <person name="Hayles J."/>
            <person name="Baker S.G."/>
            <person name="Basham D."/>
            <person name="Bowman S."/>
            <person name="Brooks K."/>
            <person name="Brown D."/>
            <person name="Brown S."/>
            <person name="Chillingworth T."/>
            <person name="Churcher C.M."/>
            <person name="Collins M."/>
            <person name="Connor R."/>
            <person name="Cronin A."/>
            <person name="Davis P."/>
            <person name="Feltwell T."/>
            <person name="Fraser A."/>
            <person name="Gentles S."/>
            <person name="Goble A."/>
            <person name="Hamlin N."/>
            <person name="Harris D.E."/>
            <person name="Hidalgo J."/>
            <person name="Hodgson G."/>
            <person name="Holroyd S."/>
            <person name="Hornsby T."/>
            <person name="Howarth S."/>
            <person name="Huckle E.J."/>
            <person name="Hunt S."/>
            <person name="Jagels K."/>
            <person name="James K.D."/>
            <person name="Jones L."/>
            <person name="Jones M."/>
            <person name="Leather S."/>
            <person name="McDonald S."/>
            <person name="McLean J."/>
            <person name="Mooney P."/>
            <person name="Moule S."/>
            <person name="Mungall K.L."/>
            <person name="Murphy L.D."/>
            <person name="Niblett D."/>
            <person name="Odell C."/>
            <person name="Oliver K."/>
            <person name="O'Neil S."/>
            <person name="Pearson D."/>
            <person name="Quail M.A."/>
            <person name="Rabbinowitsch E."/>
            <person name="Rutherford K.M."/>
            <person name="Rutter S."/>
            <person name="Saunders D."/>
            <person name="Seeger K."/>
            <person name="Sharp S."/>
            <person name="Skelton J."/>
            <person name="Simmonds M.N."/>
            <person name="Squares R."/>
            <person name="Squares S."/>
            <person name="Stevens K."/>
            <person name="Taylor K."/>
            <person name="Taylor R.G."/>
            <person name="Tivey A."/>
            <person name="Walsh S.V."/>
            <person name="Warren T."/>
            <person name="Whitehead S."/>
            <person name="Woodward J.R."/>
            <person name="Volckaert G."/>
            <person name="Aert R."/>
            <person name="Robben J."/>
            <person name="Grymonprez B."/>
            <person name="Weltjens I."/>
            <person name="Vanstreels E."/>
            <person name="Rieger M."/>
            <person name="Schaefer M."/>
            <person name="Mueller-Auer S."/>
            <person name="Gabel C."/>
            <person name="Fuchs M."/>
            <person name="Duesterhoeft A."/>
            <person name="Fritzc C."/>
            <person name="Holzer E."/>
            <person name="Moestl D."/>
            <person name="Hilbert H."/>
            <person name="Borzym K."/>
            <person name="Langer I."/>
            <person name="Beck A."/>
            <person name="Lehrach H."/>
            <person name="Reinhardt R."/>
            <person name="Pohl T.M."/>
            <person name="Eger P."/>
            <person name="Zimmermann W."/>
            <person name="Wedler H."/>
            <person name="Wambutt R."/>
            <person name="Purnelle B."/>
            <person name="Goffeau A."/>
            <person name="Cadieu E."/>
            <person name="Dreano S."/>
            <person name="Gloux S."/>
            <person name="Lelaure V."/>
            <person name="Mottier S."/>
            <person name="Galibert F."/>
            <person name="Aves S.J."/>
            <person name="Xiang Z."/>
            <person name="Hunt C."/>
            <person name="Moore K."/>
            <person name="Hurst S.M."/>
            <person name="Lucas M."/>
            <person name="Rochet M."/>
            <person name="Gaillardin C."/>
            <person name="Tallada V.A."/>
            <person name="Garzon A."/>
            <person name="Thode G."/>
            <person name="Daga R.R."/>
            <person name="Cruzado L."/>
            <person name="Jimenez J."/>
            <person name="Sanchez M."/>
            <person name="del Rey F."/>
            <person name="Benito J."/>
            <person name="Dominguez A."/>
            <person name="Revuelta J.L."/>
            <person name="Moreno S."/>
            <person name="Armstrong J."/>
            <person name="Forsburg S.L."/>
            <person name="Cerutti L."/>
            <person name="Lowe T."/>
            <person name="McCombie W.R."/>
            <person name="Paulsen I."/>
            <person name="Potashkin J."/>
            <person name="Shpakovski G.V."/>
            <person name="Ussery D."/>
            <person name="Barrell B.G."/>
            <person name="Nurse P."/>
        </authorList>
    </citation>
    <scope>NUCLEOTIDE SEQUENCE [LARGE SCALE GENOMIC DNA]</scope>
    <source>
        <strain>972 / ATCC 24843</strain>
    </source>
</reference>
<reference key="2">
    <citation type="journal article" date="2000" name="Genes Cells">
        <title>Large-scale screening of intracellular protein localization in living fission yeast cells by the use of a GFP-fusion genomic DNA library.</title>
        <authorList>
            <person name="Ding D.-Q."/>
            <person name="Tomita Y."/>
            <person name="Yamamoto A."/>
            <person name="Chikashige Y."/>
            <person name="Haraguchi T."/>
            <person name="Hiraoka Y."/>
        </authorList>
    </citation>
    <scope>NUCLEOTIDE SEQUENCE [LARGE SCALE GENOMIC DNA] OF 340-537</scope>
    <scope>SUBCELLULAR LOCATION</scope>
    <source>
        <strain>ATCC 38364 / 968</strain>
    </source>
</reference>
<reference key="3">
    <citation type="journal article" date="2002" name="Nucleic Acids Res.">
        <title>Characterization of the fission yeast ribosomal DNA binding factor: components share homology with upstream activating factor and with SWI/SNF subunits.</title>
        <authorList>
            <person name="Liu M."/>
            <person name="Guo A."/>
            <person name="Boukhgalter B."/>
            <person name="Van Den Heuvel K."/>
            <person name="Tripp M."/>
            <person name="Pape L."/>
        </authorList>
    </citation>
    <scope>FUNCTION</scope>
    <scope>IDENTIFICATION IN THE UAF COMPLEX</scope>
    <scope>INTERACTION WITH RRN10</scope>
</reference>
<reference key="4">
    <citation type="journal article" date="2006" name="Nat. Biotechnol.">
        <title>ORFeome cloning and global analysis of protein localization in the fission yeast Schizosaccharomyces pombe.</title>
        <authorList>
            <person name="Matsuyama A."/>
            <person name="Arai R."/>
            <person name="Yashiroda Y."/>
            <person name="Shirai A."/>
            <person name="Kamata A."/>
            <person name="Sekido S."/>
            <person name="Kobayashi Y."/>
            <person name="Hashimoto A."/>
            <person name="Hamamoto M."/>
            <person name="Hiraoka Y."/>
            <person name="Horinouchi S."/>
            <person name="Yoshida M."/>
        </authorList>
    </citation>
    <scope>SUBCELLULAR LOCATION [LARGE SCALE ANALYSIS]</scope>
</reference>
<reference key="5">
    <citation type="journal article" date="2007" name="Mol. Biol. Cell">
        <title>The nucleolar net1/cfi1-related protein dnt1 antagonizes the septation initiation network in fission yeast.</title>
        <authorList>
            <person name="Jin Q.W."/>
            <person name="Ray S."/>
            <person name="Choi S.H."/>
            <person name="McCollum D."/>
        </authorList>
    </citation>
    <scope>SUBCELLULAR LOCATION</scope>
</reference>
<gene>
    <name type="primary">rrn5</name>
    <name type="ORF">SPAC29A4.10</name>
</gene>
<comment type="function">
    <text evidence="2">Component of the UAF (upstream activation factor) complex which interacts with the upstream element of the RNA polymerase I promoter and forms a stable preinitiation complex. UAF seems to stimulate basal transcription to a fully activated level.</text>
</comment>
<comment type="subunit">
    <text evidence="2">Component of the UAF (upstream activation factor) complex which consists of spp27/uaf30, rrn5, rrn10, and histones H3 and H4. Interacts with rrn10.</text>
</comment>
<comment type="subcellular location">
    <subcellularLocation>
        <location evidence="1 3 4">Nucleus</location>
        <location evidence="1 3 4">Nucleolus</location>
    </subcellularLocation>
</comment>
<dbReference type="EMBL" id="CU329670">
    <property type="protein sequence ID" value="CAB10137.1"/>
    <property type="molecule type" value="Genomic_DNA"/>
</dbReference>
<dbReference type="EMBL" id="AB027899">
    <property type="protein sequence ID" value="BAA87203.1"/>
    <property type="molecule type" value="Genomic_DNA"/>
</dbReference>
<dbReference type="PIR" id="T38479">
    <property type="entry name" value="T38479"/>
</dbReference>
<dbReference type="RefSeq" id="NP_594872.1">
    <property type="nucleotide sequence ID" value="NM_001020301.2"/>
</dbReference>
<dbReference type="SMR" id="O14013"/>
<dbReference type="BioGRID" id="279184">
    <property type="interactions" value="5"/>
</dbReference>
<dbReference type="FunCoup" id="O14013">
    <property type="interactions" value="59"/>
</dbReference>
<dbReference type="STRING" id="284812.O14013"/>
<dbReference type="iPTMnet" id="O14013"/>
<dbReference type="PaxDb" id="4896-SPAC29A4.10.1"/>
<dbReference type="EnsemblFungi" id="SPAC29A4.10.1">
    <property type="protein sequence ID" value="SPAC29A4.10.1:pep"/>
    <property type="gene ID" value="SPAC29A4.10"/>
</dbReference>
<dbReference type="GeneID" id="2542734"/>
<dbReference type="KEGG" id="spo:2542734"/>
<dbReference type="PomBase" id="SPAC29A4.10">
    <property type="gene designation" value="rrn5"/>
</dbReference>
<dbReference type="VEuPathDB" id="FungiDB:SPAC29A4.10"/>
<dbReference type="eggNOG" id="ENOG502RY38">
    <property type="taxonomic scope" value="Eukaryota"/>
</dbReference>
<dbReference type="HOGENOM" id="CLU_492710_0_0_1"/>
<dbReference type="InParanoid" id="O14013"/>
<dbReference type="OMA" id="VQPICYY"/>
<dbReference type="PRO" id="PR:O14013"/>
<dbReference type="Proteomes" id="UP000002485">
    <property type="component" value="Chromosome I"/>
</dbReference>
<dbReference type="GO" id="GO:0005730">
    <property type="term" value="C:nucleolus"/>
    <property type="evidence" value="ECO:0000314"/>
    <property type="project" value="PomBase"/>
</dbReference>
<dbReference type="GO" id="GO:0005634">
    <property type="term" value="C:nucleus"/>
    <property type="evidence" value="ECO:0007005"/>
    <property type="project" value="PomBase"/>
</dbReference>
<dbReference type="GO" id="GO:0000500">
    <property type="term" value="C:RNA polymerase I upstream activating factor complex"/>
    <property type="evidence" value="ECO:0000314"/>
    <property type="project" value="PomBase"/>
</dbReference>
<dbReference type="GO" id="GO:0000182">
    <property type="term" value="F:rDNA binding"/>
    <property type="evidence" value="ECO:0000314"/>
    <property type="project" value="PomBase"/>
</dbReference>
<dbReference type="GO" id="GO:0042790">
    <property type="term" value="P:nucleolar large rRNA transcription by RNA polymerase I"/>
    <property type="evidence" value="ECO:0007669"/>
    <property type="project" value="InterPro"/>
</dbReference>
<dbReference type="GO" id="GO:0006361">
    <property type="term" value="P:transcription initiation at RNA polymerase I promoter"/>
    <property type="evidence" value="ECO:0000315"/>
    <property type="project" value="PomBase"/>
</dbReference>
<dbReference type="CDD" id="cd00167">
    <property type="entry name" value="SANT"/>
    <property type="match status" value="1"/>
</dbReference>
<dbReference type="Gene3D" id="1.10.10.60">
    <property type="entry name" value="Homeodomain-like"/>
    <property type="match status" value="1"/>
</dbReference>
<dbReference type="InterPro" id="IPR009057">
    <property type="entry name" value="Homeodomain-like_sf"/>
</dbReference>
<dbReference type="InterPro" id="IPR039601">
    <property type="entry name" value="Rrn5"/>
</dbReference>
<dbReference type="InterPro" id="IPR001005">
    <property type="entry name" value="SANT/Myb"/>
</dbReference>
<dbReference type="PANTHER" id="PTHR28079">
    <property type="entry name" value="RNA POLYMERASE I-SPECIFIC TRANSCRIPTION INITIATION FACTOR RRN5"/>
    <property type="match status" value="1"/>
</dbReference>
<dbReference type="PANTHER" id="PTHR28079:SF1">
    <property type="entry name" value="RNA POLYMERASE I-SPECIFIC TRANSCRIPTION INITIATION FACTOR RRN5"/>
    <property type="match status" value="1"/>
</dbReference>
<dbReference type="Pfam" id="PF00249">
    <property type="entry name" value="Myb_DNA-binding"/>
    <property type="match status" value="1"/>
</dbReference>
<dbReference type="SMART" id="SM00717">
    <property type="entry name" value="SANT"/>
    <property type="match status" value="1"/>
</dbReference>
<dbReference type="SUPFAM" id="SSF46689">
    <property type="entry name" value="Homeodomain-like"/>
    <property type="match status" value="1"/>
</dbReference>
<proteinExistence type="evidence at protein level"/>
<protein>
    <recommendedName>
        <fullName>RNA polymerase I-specific transcription initiation factor rrn5</fullName>
    </recommendedName>
</protein>
<organism>
    <name type="scientific">Schizosaccharomyces pombe (strain 972 / ATCC 24843)</name>
    <name type="common">Fission yeast</name>
    <dbReference type="NCBI Taxonomy" id="284812"/>
    <lineage>
        <taxon>Eukaryota</taxon>
        <taxon>Fungi</taxon>
        <taxon>Dikarya</taxon>
        <taxon>Ascomycota</taxon>
        <taxon>Taphrinomycotina</taxon>
        <taxon>Schizosaccharomycetes</taxon>
        <taxon>Schizosaccharomycetales</taxon>
        <taxon>Schizosaccharomycetaceae</taxon>
        <taxon>Schizosaccharomyces</taxon>
    </lineage>
</organism>
<evidence type="ECO:0000269" key="1">
    <source>
    </source>
</evidence>
<evidence type="ECO:0000269" key="2">
    <source>
    </source>
</evidence>
<evidence type="ECO:0000269" key="3">
    <source>
    </source>
</evidence>
<evidence type="ECO:0000269" key="4">
    <source>
    </source>
</evidence>
<name>RRN5_SCHPO</name>